<dbReference type="EC" id="2.5.1.3" evidence="1"/>
<dbReference type="EMBL" id="CP000034">
    <property type="protein sequence ID" value="ABB63689.1"/>
    <property type="molecule type" value="Genomic_DNA"/>
</dbReference>
<dbReference type="RefSeq" id="WP_000284604.1">
    <property type="nucleotide sequence ID" value="NC_007606.1"/>
</dbReference>
<dbReference type="RefSeq" id="YP_405180.1">
    <property type="nucleotide sequence ID" value="NC_007606.1"/>
</dbReference>
<dbReference type="SMR" id="Q32AG6"/>
<dbReference type="STRING" id="300267.SDY_3733"/>
<dbReference type="EnsemblBacteria" id="ABB63689">
    <property type="protein sequence ID" value="ABB63689"/>
    <property type="gene ID" value="SDY_3733"/>
</dbReference>
<dbReference type="KEGG" id="sdy:SDY_3733"/>
<dbReference type="PATRIC" id="fig|300267.13.peg.4425"/>
<dbReference type="HOGENOM" id="CLU_018272_3_3_6"/>
<dbReference type="UniPathway" id="UPA00060">
    <property type="reaction ID" value="UER00141"/>
</dbReference>
<dbReference type="Proteomes" id="UP000002716">
    <property type="component" value="Chromosome"/>
</dbReference>
<dbReference type="GO" id="GO:0005737">
    <property type="term" value="C:cytoplasm"/>
    <property type="evidence" value="ECO:0007669"/>
    <property type="project" value="TreeGrafter"/>
</dbReference>
<dbReference type="GO" id="GO:0000287">
    <property type="term" value="F:magnesium ion binding"/>
    <property type="evidence" value="ECO:0007669"/>
    <property type="project" value="UniProtKB-UniRule"/>
</dbReference>
<dbReference type="GO" id="GO:0004789">
    <property type="term" value="F:thiamine-phosphate diphosphorylase activity"/>
    <property type="evidence" value="ECO:0007669"/>
    <property type="project" value="UniProtKB-UniRule"/>
</dbReference>
<dbReference type="GO" id="GO:0009228">
    <property type="term" value="P:thiamine biosynthetic process"/>
    <property type="evidence" value="ECO:0007669"/>
    <property type="project" value="UniProtKB-KW"/>
</dbReference>
<dbReference type="GO" id="GO:0009229">
    <property type="term" value="P:thiamine diphosphate biosynthetic process"/>
    <property type="evidence" value="ECO:0007669"/>
    <property type="project" value="UniProtKB-UniRule"/>
</dbReference>
<dbReference type="CDD" id="cd00564">
    <property type="entry name" value="TMP_TenI"/>
    <property type="match status" value="1"/>
</dbReference>
<dbReference type="FunFam" id="3.20.20.70:FF:000064">
    <property type="entry name" value="Thiamine-phosphate synthase"/>
    <property type="match status" value="1"/>
</dbReference>
<dbReference type="Gene3D" id="3.20.20.70">
    <property type="entry name" value="Aldolase class I"/>
    <property type="match status" value="1"/>
</dbReference>
<dbReference type="HAMAP" id="MF_00097">
    <property type="entry name" value="TMP_synthase"/>
    <property type="match status" value="1"/>
</dbReference>
<dbReference type="InterPro" id="IPR013785">
    <property type="entry name" value="Aldolase_TIM"/>
</dbReference>
<dbReference type="InterPro" id="IPR036206">
    <property type="entry name" value="ThiamineP_synth_sf"/>
</dbReference>
<dbReference type="InterPro" id="IPR022998">
    <property type="entry name" value="ThiamineP_synth_TenI"/>
</dbReference>
<dbReference type="InterPro" id="IPR034291">
    <property type="entry name" value="TMP_synthase"/>
</dbReference>
<dbReference type="NCBIfam" id="NF002904">
    <property type="entry name" value="PRK03512.1"/>
    <property type="match status" value="1"/>
</dbReference>
<dbReference type="NCBIfam" id="TIGR00693">
    <property type="entry name" value="thiE"/>
    <property type="match status" value="1"/>
</dbReference>
<dbReference type="PANTHER" id="PTHR20857">
    <property type="entry name" value="THIAMINE-PHOSPHATE PYROPHOSPHORYLASE"/>
    <property type="match status" value="1"/>
</dbReference>
<dbReference type="PANTHER" id="PTHR20857:SF15">
    <property type="entry name" value="THIAMINE-PHOSPHATE SYNTHASE"/>
    <property type="match status" value="1"/>
</dbReference>
<dbReference type="Pfam" id="PF02581">
    <property type="entry name" value="TMP-TENI"/>
    <property type="match status" value="1"/>
</dbReference>
<dbReference type="SUPFAM" id="SSF51391">
    <property type="entry name" value="Thiamin phosphate synthase"/>
    <property type="match status" value="1"/>
</dbReference>
<evidence type="ECO:0000255" key="1">
    <source>
        <dbReference type="HAMAP-Rule" id="MF_00097"/>
    </source>
</evidence>
<keyword id="KW-0460">Magnesium</keyword>
<keyword id="KW-0479">Metal-binding</keyword>
<keyword id="KW-1185">Reference proteome</keyword>
<keyword id="KW-0784">Thiamine biosynthesis</keyword>
<keyword id="KW-0808">Transferase</keyword>
<feature type="chain" id="PRO_1000008171" description="Thiamine-phosphate synthase">
    <location>
        <begin position="1"/>
        <end position="211"/>
    </location>
</feature>
<feature type="binding site" evidence="1">
    <location>
        <begin position="37"/>
        <end position="41"/>
    </location>
    <ligand>
        <name>4-amino-2-methyl-5-(diphosphooxymethyl)pyrimidine</name>
        <dbReference type="ChEBI" id="CHEBI:57841"/>
    </ligand>
</feature>
<feature type="binding site" evidence="1">
    <location>
        <position position="69"/>
    </location>
    <ligand>
        <name>4-amino-2-methyl-5-(diphosphooxymethyl)pyrimidine</name>
        <dbReference type="ChEBI" id="CHEBI:57841"/>
    </ligand>
</feature>
<feature type="binding site" evidence="1">
    <location>
        <position position="70"/>
    </location>
    <ligand>
        <name>Mg(2+)</name>
        <dbReference type="ChEBI" id="CHEBI:18420"/>
    </ligand>
</feature>
<feature type="binding site" evidence="1">
    <location>
        <position position="89"/>
    </location>
    <ligand>
        <name>Mg(2+)</name>
        <dbReference type="ChEBI" id="CHEBI:18420"/>
    </ligand>
</feature>
<feature type="binding site" evidence="1">
    <location>
        <position position="108"/>
    </location>
    <ligand>
        <name>4-amino-2-methyl-5-(diphosphooxymethyl)pyrimidine</name>
        <dbReference type="ChEBI" id="CHEBI:57841"/>
    </ligand>
</feature>
<feature type="binding site" evidence="1">
    <location>
        <begin position="134"/>
        <end position="136"/>
    </location>
    <ligand>
        <name>2-[(2R,5Z)-2-carboxy-4-methylthiazol-5(2H)-ylidene]ethyl phosphate</name>
        <dbReference type="ChEBI" id="CHEBI:62899"/>
    </ligand>
</feature>
<feature type="binding site" evidence="1">
    <location>
        <position position="137"/>
    </location>
    <ligand>
        <name>4-amino-2-methyl-5-(diphosphooxymethyl)pyrimidine</name>
        <dbReference type="ChEBI" id="CHEBI:57841"/>
    </ligand>
</feature>
<feature type="binding site" evidence="1">
    <location>
        <position position="166"/>
    </location>
    <ligand>
        <name>2-[(2R,5Z)-2-carboxy-4-methylthiazol-5(2H)-ylidene]ethyl phosphate</name>
        <dbReference type="ChEBI" id="CHEBI:62899"/>
    </ligand>
</feature>
<feature type="binding site" evidence="1">
    <location>
        <begin position="186"/>
        <end position="187"/>
    </location>
    <ligand>
        <name>2-[(2R,5Z)-2-carboxy-4-methylthiazol-5(2H)-ylidene]ethyl phosphate</name>
        <dbReference type="ChEBI" id="CHEBI:62899"/>
    </ligand>
</feature>
<proteinExistence type="inferred from homology"/>
<organism>
    <name type="scientific">Shigella dysenteriae serotype 1 (strain Sd197)</name>
    <dbReference type="NCBI Taxonomy" id="300267"/>
    <lineage>
        <taxon>Bacteria</taxon>
        <taxon>Pseudomonadati</taxon>
        <taxon>Pseudomonadota</taxon>
        <taxon>Gammaproteobacteria</taxon>
        <taxon>Enterobacterales</taxon>
        <taxon>Enterobacteriaceae</taxon>
        <taxon>Shigella</taxon>
    </lineage>
</organism>
<accession>Q32AG6</accession>
<reference key="1">
    <citation type="journal article" date="2005" name="Nucleic Acids Res.">
        <title>Genome dynamics and diversity of Shigella species, the etiologic agents of bacillary dysentery.</title>
        <authorList>
            <person name="Yang F."/>
            <person name="Yang J."/>
            <person name="Zhang X."/>
            <person name="Chen L."/>
            <person name="Jiang Y."/>
            <person name="Yan Y."/>
            <person name="Tang X."/>
            <person name="Wang J."/>
            <person name="Xiong Z."/>
            <person name="Dong J."/>
            <person name="Xue Y."/>
            <person name="Zhu Y."/>
            <person name="Xu X."/>
            <person name="Sun L."/>
            <person name="Chen S."/>
            <person name="Nie H."/>
            <person name="Peng J."/>
            <person name="Xu J."/>
            <person name="Wang Y."/>
            <person name="Yuan Z."/>
            <person name="Wen Y."/>
            <person name="Yao Z."/>
            <person name="Shen Y."/>
            <person name="Qiang B."/>
            <person name="Hou Y."/>
            <person name="Yu J."/>
            <person name="Jin Q."/>
        </authorList>
    </citation>
    <scope>NUCLEOTIDE SEQUENCE [LARGE SCALE GENOMIC DNA]</scope>
    <source>
        <strain>Sd197</strain>
    </source>
</reference>
<comment type="function">
    <text evidence="1">Condenses 4-methyl-5-(beta-hydroxyethyl)thiazole monophosphate (THZ-P) and 2-methyl-4-amino-5-hydroxymethyl pyrimidine pyrophosphate (HMP-PP) to form thiamine monophosphate (TMP).</text>
</comment>
<comment type="catalytic activity">
    <reaction evidence="1">
        <text>2-[(2R,5Z)-2-carboxy-4-methylthiazol-5(2H)-ylidene]ethyl phosphate + 4-amino-2-methyl-5-(diphosphooxymethyl)pyrimidine + 2 H(+) = thiamine phosphate + CO2 + diphosphate</text>
        <dbReference type="Rhea" id="RHEA:47844"/>
        <dbReference type="ChEBI" id="CHEBI:15378"/>
        <dbReference type="ChEBI" id="CHEBI:16526"/>
        <dbReference type="ChEBI" id="CHEBI:33019"/>
        <dbReference type="ChEBI" id="CHEBI:37575"/>
        <dbReference type="ChEBI" id="CHEBI:57841"/>
        <dbReference type="ChEBI" id="CHEBI:62899"/>
        <dbReference type="EC" id="2.5.1.3"/>
    </reaction>
</comment>
<comment type="catalytic activity">
    <reaction evidence="1">
        <text>2-(2-carboxy-4-methylthiazol-5-yl)ethyl phosphate + 4-amino-2-methyl-5-(diphosphooxymethyl)pyrimidine + 2 H(+) = thiamine phosphate + CO2 + diphosphate</text>
        <dbReference type="Rhea" id="RHEA:47848"/>
        <dbReference type="ChEBI" id="CHEBI:15378"/>
        <dbReference type="ChEBI" id="CHEBI:16526"/>
        <dbReference type="ChEBI" id="CHEBI:33019"/>
        <dbReference type="ChEBI" id="CHEBI:37575"/>
        <dbReference type="ChEBI" id="CHEBI:57841"/>
        <dbReference type="ChEBI" id="CHEBI:62890"/>
        <dbReference type="EC" id="2.5.1.3"/>
    </reaction>
</comment>
<comment type="catalytic activity">
    <reaction evidence="1">
        <text>4-methyl-5-(2-phosphooxyethyl)-thiazole + 4-amino-2-methyl-5-(diphosphooxymethyl)pyrimidine + H(+) = thiamine phosphate + diphosphate</text>
        <dbReference type="Rhea" id="RHEA:22328"/>
        <dbReference type="ChEBI" id="CHEBI:15378"/>
        <dbReference type="ChEBI" id="CHEBI:33019"/>
        <dbReference type="ChEBI" id="CHEBI:37575"/>
        <dbReference type="ChEBI" id="CHEBI:57841"/>
        <dbReference type="ChEBI" id="CHEBI:58296"/>
        <dbReference type="EC" id="2.5.1.3"/>
    </reaction>
</comment>
<comment type="cofactor">
    <cofactor evidence="1">
        <name>Mg(2+)</name>
        <dbReference type="ChEBI" id="CHEBI:18420"/>
    </cofactor>
    <text evidence="1">Binds 1 Mg(2+) ion per subunit.</text>
</comment>
<comment type="pathway">
    <text evidence="1">Cofactor biosynthesis; thiamine diphosphate biosynthesis; thiamine phosphate from 4-amino-2-methyl-5-diphosphomethylpyrimidine and 4-methyl-5-(2-phosphoethyl)-thiazole: step 1/1.</text>
</comment>
<comment type="similarity">
    <text evidence="1">Belongs to the thiamine-phosphate synthase family.</text>
</comment>
<sequence>MYQPDFPPVPFRLGLYPVVDSVQWIERLLDAGVRTLQLRIKDRRDEEVEADVVAAIALGRRYNARLFINDYWRLAIKHQAYGVHLGQEDLQATDLSAIRAAGLRLGVSTHDDMEIDVALAARPSYIALGHVFPTQTKQMPSAAQGLEQLARHVERLADYPTVAIGGISLPRAPAVIATGVGSIAVVSAITQAADWRLATAQLLEIAGVGDE</sequence>
<gene>
    <name evidence="1" type="primary">thiE</name>
    <name type="ordered locus">SDY_3733</name>
</gene>
<name>THIE_SHIDS</name>
<protein>
    <recommendedName>
        <fullName evidence="1">Thiamine-phosphate synthase</fullName>
        <shortName evidence="1">TP synthase</shortName>
        <shortName evidence="1">TPS</shortName>
        <ecNumber evidence="1">2.5.1.3</ecNumber>
    </recommendedName>
    <alternativeName>
        <fullName evidence="1">Thiamine-phosphate pyrophosphorylase</fullName>
        <shortName evidence="1">TMP pyrophosphorylase</shortName>
        <shortName evidence="1">TMP-PPase</shortName>
    </alternativeName>
</protein>